<proteinExistence type="evidence at protein level"/>
<organism>
    <name type="scientific">Osteopilus septentrionalis</name>
    <name type="common">Cuban treefrog</name>
    <dbReference type="NCBI Taxonomy" id="317373"/>
    <lineage>
        <taxon>Eukaryota</taxon>
        <taxon>Metazoa</taxon>
        <taxon>Chordata</taxon>
        <taxon>Craniata</taxon>
        <taxon>Vertebrata</taxon>
        <taxon>Euteleostomi</taxon>
        <taxon>Amphibia</taxon>
        <taxon>Batrachia</taxon>
        <taxon>Anura</taxon>
        <taxon>Neobatrachia</taxon>
        <taxon>Hyloidea</taxon>
        <taxon>Hylidae</taxon>
        <taxon>Hylinae</taxon>
        <taxon>Lophiohylini</taxon>
        <taxon>Osteopilus</taxon>
    </lineage>
</organism>
<reference key="1">
    <citation type="journal article" date="2021" name="Rapid Commun. Mass Spectrom.">
        <title>Manual mass spectrometry de novo sequencing of the anionic host defense peptides of the Cuban Treefrog Osteopilus septentrionalis.</title>
        <authorList>
            <person name="Samgina T.Y."/>
            <person name="Tolpina M.D."/>
            <person name="Surin A.K."/>
            <person name="Kovalev S.V."/>
            <person name="Bosch R.A."/>
            <person name="Alonso I.P."/>
            <person name="Garcia F.A."/>
            <person name="Gonzalez Lopez L.J."/>
            <person name="Lebedev A.T."/>
        </authorList>
    </citation>
    <scope>PROTEIN SEQUENCE</scope>
    <scope>MASS SPECTROMETRY</scope>
</reference>
<dbReference type="GO" id="GO:0005576">
    <property type="term" value="C:extracellular region"/>
    <property type="evidence" value="ECO:0007669"/>
    <property type="project" value="UniProtKB-SubCell"/>
</dbReference>
<evidence type="ECO:0000269" key="1">
    <source>
    </source>
</evidence>
<evidence type="ECO:0000303" key="2">
    <source>
    </source>
</evidence>
<evidence type="ECO:0000305" key="3"/>
<evidence type="ECO:0000305" key="4">
    <source>
    </source>
</evidence>
<name>SEP1E_OSTSE</name>
<accession>C0HLW6</accession>
<comment type="function">
    <text evidence="2">May act as an antimicrobial peptide.</text>
</comment>
<comment type="subcellular location">
    <subcellularLocation>
        <location evidence="1">Secreted</location>
    </subcellularLocation>
</comment>
<comment type="tissue specificity">
    <text evidence="4">Expressed in skin glands.</text>
</comment>
<comment type="mass spectrometry" mass="1624.806" method="Electrospray" evidence="1"/>
<comment type="similarity">
    <text evidence="3">Belongs to the Frog skin active peptide (FSAP) family. Septenin subfamily.</text>
</comment>
<keyword id="KW-0903">Direct protein sequencing</keyword>
<keyword id="KW-0964">Secreted</keyword>
<feature type="chain" id="PRO_0000453939" description="Septenin 1e">
    <location>
        <begin position="1"/>
        <end position="17"/>
    </location>
</feature>
<feature type="unsure residue" description="L or I" evidence="1">
    <location>
        <position position="11"/>
    </location>
</feature>
<sequence length="17" mass="1626">TDAVANGVHAISGVVDT</sequence>
<protein>
    <recommendedName>
        <fullName evidence="2">Septenin 1e</fullName>
    </recommendedName>
</protein>